<dbReference type="EC" id="4.1.1.48" evidence="1"/>
<dbReference type="EMBL" id="CP000949">
    <property type="protein sequence ID" value="ACA75257.1"/>
    <property type="molecule type" value="Genomic_DNA"/>
</dbReference>
<dbReference type="SMR" id="B1JE34"/>
<dbReference type="STRING" id="390235.PputW619_4781"/>
<dbReference type="KEGG" id="ppw:PputW619_4781"/>
<dbReference type="eggNOG" id="COG0134">
    <property type="taxonomic scope" value="Bacteria"/>
</dbReference>
<dbReference type="HOGENOM" id="CLU_034247_2_0_6"/>
<dbReference type="OrthoDB" id="9804217at2"/>
<dbReference type="UniPathway" id="UPA00035">
    <property type="reaction ID" value="UER00043"/>
</dbReference>
<dbReference type="GO" id="GO:0004425">
    <property type="term" value="F:indole-3-glycerol-phosphate synthase activity"/>
    <property type="evidence" value="ECO:0007669"/>
    <property type="project" value="UniProtKB-UniRule"/>
</dbReference>
<dbReference type="GO" id="GO:0004640">
    <property type="term" value="F:phosphoribosylanthranilate isomerase activity"/>
    <property type="evidence" value="ECO:0007669"/>
    <property type="project" value="TreeGrafter"/>
</dbReference>
<dbReference type="GO" id="GO:0000162">
    <property type="term" value="P:L-tryptophan biosynthetic process"/>
    <property type="evidence" value="ECO:0007669"/>
    <property type="project" value="UniProtKB-UniRule"/>
</dbReference>
<dbReference type="CDD" id="cd00331">
    <property type="entry name" value="IGPS"/>
    <property type="match status" value="1"/>
</dbReference>
<dbReference type="FunFam" id="3.20.20.70:FF:000024">
    <property type="entry name" value="Indole-3-glycerol phosphate synthase"/>
    <property type="match status" value="1"/>
</dbReference>
<dbReference type="Gene3D" id="3.20.20.70">
    <property type="entry name" value="Aldolase class I"/>
    <property type="match status" value="1"/>
</dbReference>
<dbReference type="HAMAP" id="MF_00134_B">
    <property type="entry name" value="IGPS_B"/>
    <property type="match status" value="1"/>
</dbReference>
<dbReference type="InterPro" id="IPR013785">
    <property type="entry name" value="Aldolase_TIM"/>
</dbReference>
<dbReference type="InterPro" id="IPR045186">
    <property type="entry name" value="Indole-3-glycerol_P_synth"/>
</dbReference>
<dbReference type="InterPro" id="IPR013798">
    <property type="entry name" value="Indole-3-glycerol_P_synth_dom"/>
</dbReference>
<dbReference type="InterPro" id="IPR001468">
    <property type="entry name" value="Indole-3-GlycerolPSynthase_CS"/>
</dbReference>
<dbReference type="InterPro" id="IPR011060">
    <property type="entry name" value="RibuloseP-bd_barrel"/>
</dbReference>
<dbReference type="NCBIfam" id="NF001370">
    <property type="entry name" value="PRK00278.1-2"/>
    <property type="match status" value="1"/>
</dbReference>
<dbReference type="NCBIfam" id="NF001373">
    <property type="entry name" value="PRK00278.1-6"/>
    <property type="match status" value="1"/>
</dbReference>
<dbReference type="NCBIfam" id="NF001377">
    <property type="entry name" value="PRK00278.2-4"/>
    <property type="match status" value="1"/>
</dbReference>
<dbReference type="PANTHER" id="PTHR22854:SF2">
    <property type="entry name" value="INDOLE-3-GLYCEROL-PHOSPHATE SYNTHASE"/>
    <property type="match status" value="1"/>
</dbReference>
<dbReference type="PANTHER" id="PTHR22854">
    <property type="entry name" value="TRYPTOPHAN BIOSYNTHESIS PROTEIN"/>
    <property type="match status" value="1"/>
</dbReference>
<dbReference type="Pfam" id="PF00218">
    <property type="entry name" value="IGPS"/>
    <property type="match status" value="1"/>
</dbReference>
<dbReference type="SUPFAM" id="SSF51366">
    <property type="entry name" value="Ribulose-phoshate binding barrel"/>
    <property type="match status" value="1"/>
</dbReference>
<dbReference type="PROSITE" id="PS00614">
    <property type="entry name" value="IGPS"/>
    <property type="match status" value="1"/>
</dbReference>
<reference key="1">
    <citation type="submission" date="2008-02" db="EMBL/GenBank/DDBJ databases">
        <title>Complete sequence of Pseudomonas putida W619.</title>
        <authorList>
            <person name="Copeland A."/>
            <person name="Lucas S."/>
            <person name="Lapidus A."/>
            <person name="Barry K."/>
            <person name="Detter J.C."/>
            <person name="Glavina del Rio T."/>
            <person name="Dalin E."/>
            <person name="Tice H."/>
            <person name="Pitluck S."/>
            <person name="Chain P."/>
            <person name="Malfatti S."/>
            <person name="Shin M."/>
            <person name="Vergez L."/>
            <person name="Schmutz J."/>
            <person name="Larimer F."/>
            <person name="Land M."/>
            <person name="Hauser L."/>
            <person name="Kyrpides N."/>
            <person name="Kim E."/>
            <person name="Taghavi S."/>
            <person name="Vangronsveld D."/>
            <person name="van der Lelie D."/>
            <person name="Richardson P."/>
        </authorList>
    </citation>
    <scope>NUCLEOTIDE SEQUENCE [LARGE SCALE GENOMIC DNA]</scope>
    <source>
        <strain>W619</strain>
    </source>
</reference>
<name>TRPC_PSEPW</name>
<feature type="chain" id="PRO_1000095881" description="Indole-3-glycerol phosphate synthase">
    <location>
        <begin position="1"/>
        <end position="277"/>
    </location>
</feature>
<gene>
    <name evidence="1" type="primary">trpC</name>
    <name type="ordered locus">PputW619_4781</name>
</gene>
<organism>
    <name type="scientific">Pseudomonas putida (strain W619)</name>
    <dbReference type="NCBI Taxonomy" id="390235"/>
    <lineage>
        <taxon>Bacteria</taxon>
        <taxon>Pseudomonadati</taxon>
        <taxon>Pseudomonadota</taxon>
        <taxon>Gammaproteobacteria</taxon>
        <taxon>Pseudomonadales</taxon>
        <taxon>Pseudomonadaceae</taxon>
        <taxon>Pseudomonas</taxon>
    </lineage>
</organism>
<comment type="catalytic activity">
    <reaction evidence="1">
        <text>1-(2-carboxyphenylamino)-1-deoxy-D-ribulose 5-phosphate + H(+) = (1S,2R)-1-C-(indol-3-yl)glycerol 3-phosphate + CO2 + H2O</text>
        <dbReference type="Rhea" id="RHEA:23476"/>
        <dbReference type="ChEBI" id="CHEBI:15377"/>
        <dbReference type="ChEBI" id="CHEBI:15378"/>
        <dbReference type="ChEBI" id="CHEBI:16526"/>
        <dbReference type="ChEBI" id="CHEBI:58613"/>
        <dbReference type="ChEBI" id="CHEBI:58866"/>
        <dbReference type="EC" id="4.1.1.48"/>
    </reaction>
</comment>
<comment type="pathway">
    <text evidence="1">Amino-acid biosynthesis; L-tryptophan biosynthesis; L-tryptophan from chorismate: step 4/5.</text>
</comment>
<comment type="similarity">
    <text evidence="1">Belongs to the TrpC family.</text>
</comment>
<keyword id="KW-0028">Amino-acid biosynthesis</keyword>
<keyword id="KW-0057">Aromatic amino acid biosynthesis</keyword>
<keyword id="KW-0210">Decarboxylase</keyword>
<keyword id="KW-0456">Lyase</keyword>
<keyword id="KW-0822">Tryptophan biosynthesis</keyword>
<protein>
    <recommendedName>
        <fullName evidence="1">Indole-3-glycerol phosphate synthase</fullName>
        <shortName evidence="1">IGPS</shortName>
        <ecNumber evidence="1">4.1.1.48</ecNumber>
    </recommendedName>
</protein>
<proteinExistence type="inferred from homology"/>
<sequence length="277" mass="30587">MSVPTVLERIVARKFQEVAERSARVSLAEMEHLAKGADAPRGFANALIEQAKRKQPAVIAEIKKASPSKGVIRENFVPSEIAVSYEKGGATCLSVLTDVDYFQGADEYLQQARAAVSLPVIRKDFMVDPYQIIEARALGADCVLLIVSALDDVKMAELAATAKEVGLDVLVEVHDGDELERALKTLDTPLVGVNNRNLHTFEVSLETTLDLLPRIPRDRLAITESGILNRADVELMEINDVYSFLVGEAFMRAEQPGLELQRLFFPEQVKKTVQQLD</sequence>
<accession>B1JE34</accession>
<evidence type="ECO:0000255" key="1">
    <source>
        <dbReference type="HAMAP-Rule" id="MF_00134"/>
    </source>
</evidence>